<dbReference type="EMBL" id="U39205">
    <property type="protein sequence ID" value="AAB68307.1"/>
    <property type="molecule type" value="Genomic_DNA"/>
</dbReference>
<dbReference type="EMBL" id="BK006949">
    <property type="protein sequence ID" value="DAA11372.1"/>
    <property type="molecule type" value="Genomic_DNA"/>
</dbReference>
<dbReference type="PIR" id="S60932">
    <property type="entry name" value="S60932"/>
</dbReference>
<dbReference type="RefSeq" id="NP_015267.1">
    <property type="nucleotide sequence ID" value="NM_001183872.1"/>
</dbReference>
<dbReference type="SMR" id="Q02785"/>
<dbReference type="BioGRID" id="36122">
    <property type="interactions" value="127"/>
</dbReference>
<dbReference type="FunCoup" id="Q02785">
    <property type="interactions" value="311"/>
</dbReference>
<dbReference type="IntAct" id="Q02785">
    <property type="interactions" value="76"/>
</dbReference>
<dbReference type="MINT" id="Q02785"/>
<dbReference type="STRING" id="4932.YPL058C"/>
<dbReference type="TCDB" id="3.A.1.205.3">
    <property type="family name" value="the atp-binding cassette (abc) superfamily"/>
</dbReference>
<dbReference type="GlyCosmos" id="Q02785">
    <property type="glycosylation" value="1 site, No reported glycans"/>
</dbReference>
<dbReference type="GlyGen" id="Q02785">
    <property type="glycosylation" value="1 site"/>
</dbReference>
<dbReference type="iPTMnet" id="Q02785"/>
<dbReference type="PaxDb" id="4932-YPL058C"/>
<dbReference type="PeptideAtlas" id="Q02785"/>
<dbReference type="EnsemblFungi" id="YPL058C_mRNA">
    <property type="protein sequence ID" value="YPL058C"/>
    <property type="gene ID" value="YPL058C"/>
</dbReference>
<dbReference type="GeneID" id="856049"/>
<dbReference type="KEGG" id="sce:YPL058C"/>
<dbReference type="AGR" id="SGD:S000005979"/>
<dbReference type="SGD" id="S000005979">
    <property type="gene designation" value="PDR12"/>
</dbReference>
<dbReference type="VEuPathDB" id="FungiDB:YPL058C"/>
<dbReference type="eggNOG" id="KOG0065">
    <property type="taxonomic scope" value="Eukaryota"/>
</dbReference>
<dbReference type="GeneTree" id="ENSGT00940000176297"/>
<dbReference type="HOGENOM" id="CLU_000604_35_0_1"/>
<dbReference type="InParanoid" id="Q02785"/>
<dbReference type="OMA" id="GEMHHWI"/>
<dbReference type="OrthoDB" id="245989at2759"/>
<dbReference type="BioCyc" id="YEAST:G3O-33969-MONOMER"/>
<dbReference type="BioGRID-ORCS" id="856049">
    <property type="hits" value="0 hits in 10 CRISPR screens"/>
</dbReference>
<dbReference type="PRO" id="PR:Q02785"/>
<dbReference type="Proteomes" id="UP000002311">
    <property type="component" value="Chromosome XVI"/>
</dbReference>
<dbReference type="RNAct" id="Q02785">
    <property type="molecule type" value="protein"/>
</dbReference>
<dbReference type="GO" id="GO:0071944">
    <property type="term" value="C:cell periphery"/>
    <property type="evidence" value="ECO:0007005"/>
    <property type="project" value="SGD"/>
</dbReference>
<dbReference type="GO" id="GO:0005886">
    <property type="term" value="C:plasma membrane"/>
    <property type="evidence" value="ECO:0000314"/>
    <property type="project" value="SGD"/>
</dbReference>
<dbReference type="GO" id="GO:0140359">
    <property type="term" value="F:ABC-type transporter activity"/>
    <property type="evidence" value="ECO:0007669"/>
    <property type="project" value="InterPro"/>
</dbReference>
<dbReference type="GO" id="GO:0005524">
    <property type="term" value="F:ATP binding"/>
    <property type="evidence" value="ECO:0007669"/>
    <property type="project" value="UniProtKB-KW"/>
</dbReference>
<dbReference type="GO" id="GO:0016887">
    <property type="term" value="F:ATP hydrolysis activity"/>
    <property type="evidence" value="ECO:0007669"/>
    <property type="project" value="InterPro"/>
</dbReference>
<dbReference type="GO" id="GO:0005342">
    <property type="term" value="F:organic acid transmembrane transporter activity"/>
    <property type="evidence" value="ECO:0000314"/>
    <property type="project" value="SGD"/>
</dbReference>
<dbReference type="GO" id="GO:0015849">
    <property type="term" value="P:organic acid transport"/>
    <property type="evidence" value="ECO:0000314"/>
    <property type="project" value="SGD"/>
</dbReference>
<dbReference type="CDD" id="cd03233">
    <property type="entry name" value="ABCG_PDR_domain1"/>
    <property type="match status" value="1"/>
</dbReference>
<dbReference type="CDD" id="cd03232">
    <property type="entry name" value="ABCG_PDR_domain2"/>
    <property type="match status" value="1"/>
</dbReference>
<dbReference type="FunFam" id="3.40.50.300:FF:000054">
    <property type="entry name" value="ABC multidrug transporter atrF"/>
    <property type="match status" value="1"/>
</dbReference>
<dbReference type="FunFam" id="3.40.50.300:FF:001460">
    <property type="entry name" value="ATP-binding cassette transporter"/>
    <property type="match status" value="1"/>
</dbReference>
<dbReference type="Gene3D" id="3.40.50.300">
    <property type="entry name" value="P-loop containing nucleotide triphosphate hydrolases"/>
    <property type="match status" value="2"/>
</dbReference>
<dbReference type="InterPro" id="IPR003593">
    <property type="entry name" value="AAA+_ATPase"/>
</dbReference>
<dbReference type="InterPro" id="IPR013525">
    <property type="entry name" value="ABC2_TM"/>
</dbReference>
<dbReference type="InterPro" id="IPR029481">
    <property type="entry name" value="ABC_trans_N"/>
</dbReference>
<dbReference type="InterPro" id="IPR003439">
    <property type="entry name" value="ABC_transporter-like_ATP-bd"/>
</dbReference>
<dbReference type="InterPro" id="IPR043926">
    <property type="entry name" value="ABCG_dom"/>
</dbReference>
<dbReference type="InterPro" id="IPR034001">
    <property type="entry name" value="ABCG_PDR_1"/>
</dbReference>
<dbReference type="InterPro" id="IPR034003">
    <property type="entry name" value="ABCG_PDR_2"/>
</dbReference>
<dbReference type="InterPro" id="IPR027417">
    <property type="entry name" value="P-loop_NTPase"/>
</dbReference>
<dbReference type="InterPro" id="IPR010929">
    <property type="entry name" value="PDR_CDR_ABC"/>
</dbReference>
<dbReference type="PANTHER" id="PTHR19241">
    <property type="entry name" value="ATP-BINDING CASSETTE TRANSPORTER"/>
    <property type="match status" value="1"/>
</dbReference>
<dbReference type="Pfam" id="PF01061">
    <property type="entry name" value="ABC2_membrane"/>
    <property type="match status" value="2"/>
</dbReference>
<dbReference type="Pfam" id="PF19055">
    <property type="entry name" value="ABC2_membrane_7"/>
    <property type="match status" value="1"/>
</dbReference>
<dbReference type="Pfam" id="PF00005">
    <property type="entry name" value="ABC_tran"/>
    <property type="match status" value="2"/>
</dbReference>
<dbReference type="Pfam" id="PF14510">
    <property type="entry name" value="ABC_trans_N"/>
    <property type="match status" value="1"/>
</dbReference>
<dbReference type="Pfam" id="PF06422">
    <property type="entry name" value="PDR_CDR"/>
    <property type="match status" value="2"/>
</dbReference>
<dbReference type="SMART" id="SM00382">
    <property type="entry name" value="AAA"/>
    <property type="match status" value="2"/>
</dbReference>
<dbReference type="SUPFAM" id="SSF52540">
    <property type="entry name" value="P-loop containing nucleoside triphosphate hydrolases"/>
    <property type="match status" value="2"/>
</dbReference>
<dbReference type="PROSITE" id="PS50893">
    <property type="entry name" value="ABC_TRANSPORTER_2"/>
    <property type="match status" value="2"/>
</dbReference>
<name>PDR12_YEAST</name>
<feature type="initiator methionine" description="Removed" evidence="24">
    <location>
        <position position="1"/>
    </location>
</feature>
<feature type="chain" id="PRO_0000093445" description="ATP-dependent permease PDR12">
    <location>
        <begin position="2"/>
        <end position="1511"/>
    </location>
</feature>
<feature type="topological domain" description="Cytoplasmic" evidence="1">
    <location>
        <begin position="2"/>
        <end position="508"/>
    </location>
</feature>
<feature type="transmembrane region" description="Helical" evidence="1">
    <location>
        <begin position="509"/>
        <end position="529"/>
    </location>
</feature>
<feature type="topological domain" description="Extracellular" evidence="1">
    <location>
        <begin position="530"/>
        <end position="548"/>
    </location>
</feature>
<feature type="transmembrane region" description="Helical" evidence="1">
    <location>
        <begin position="549"/>
        <end position="569"/>
    </location>
</feature>
<feature type="topological domain" description="Cytoplasmic" evidence="1">
    <location>
        <begin position="570"/>
        <end position="597"/>
    </location>
</feature>
<feature type="transmembrane region" description="Helical" evidence="1">
    <location>
        <begin position="598"/>
        <end position="618"/>
    </location>
</feature>
<feature type="topological domain" description="Extracellular" evidence="1">
    <location>
        <begin position="619"/>
        <end position="622"/>
    </location>
</feature>
<feature type="transmembrane region" description="Helical" evidence="1">
    <location>
        <begin position="623"/>
        <end position="643"/>
    </location>
</feature>
<feature type="topological domain" description="Cytoplasmic" evidence="1">
    <location>
        <begin position="644"/>
        <end position="657"/>
    </location>
</feature>
<feature type="transmembrane region" description="Helical" evidence="1">
    <location>
        <begin position="658"/>
        <end position="678"/>
    </location>
</feature>
<feature type="topological domain" description="Extracellular" evidence="1">
    <location>
        <begin position="679"/>
        <end position="765"/>
    </location>
</feature>
<feature type="transmembrane region" description="Helical" evidence="1">
    <location>
        <begin position="766"/>
        <end position="786"/>
    </location>
</feature>
<feature type="topological domain" description="Cytoplasmic" evidence="1">
    <location>
        <begin position="787"/>
        <end position="1182"/>
    </location>
</feature>
<feature type="transmembrane region" description="Helical" evidence="1">
    <location>
        <begin position="1183"/>
        <end position="1203"/>
    </location>
</feature>
<feature type="topological domain" description="Extracellular" evidence="1">
    <location>
        <position position="1204"/>
    </location>
</feature>
<feature type="transmembrane region" description="Helical" evidence="1">
    <location>
        <begin position="1205"/>
        <end position="1225"/>
    </location>
</feature>
<feature type="topological domain" description="Cytoplasmic" evidence="1">
    <location>
        <begin position="1226"/>
        <end position="1254"/>
    </location>
</feature>
<feature type="transmembrane region" description="Helical" evidence="1">
    <location>
        <begin position="1255"/>
        <end position="1275"/>
    </location>
</feature>
<feature type="topological domain" description="Extracellular" evidence="1">
    <location>
        <begin position="1276"/>
        <end position="1291"/>
    </location>
</feature>
<feature type="transmembrane region" description="Helical" evidence="1">
    <location>
        <begin position="1292"/>
        <end position="1312"/>
    </location>
</feature>
<feature type="topological domain" description="Cytoplasmic" evidence="1">
    <location>
        <begin position="1313"/>
        <end position="1318"/>
    </location>
</feature>
<feature type="transmembrane region" description="Helical" evidence="1">
    <location>
        <begin position="1319"/>
        <end position="1339"/>
    </location>
</feature>
<feature type="topological domain" description="Extracellular" evidence="1">
    <location>
        <begin position="1340"/>
        <end position="1444"/>
    </location>
</feature>
<feature type="transmembrane region" description="Helical" evidence="1">
    <location>
        <begin position="1445"/>
        <end position="1465"/>
    </location>
</feature>
<feature type="topological domain" description="Cytoplasmic" evidence="1">
    <location>
        <begin position="1466"/>
        <end position="1511"/>
    </location>
</feature>
<feature type="domain" description="ABC transporter 1" evidence="2">
    <location>
        <begin position="144"/>
        <end position="397"/>
    </location>
</feature>
<feature type="domain" description="ABC transporter 2" evidence="2">
    <location>
        <begin position="836"/>
        <end position="1084"/>
    </location>
</feature>
<feature type="region of interest" description="Disordered" evidence="3">
    <location>
        <begin position="1"/>
        <end position="37"/>
    </location>
</feature>
<feature type="compositionally biased region" description="Basic and acidic residues" evidence="3">
    <location>
        <begin position="1"/>
        <end position="21"/>
    </location>
</feature>
<feature type="binding site" evidence="2">
    <location>
        <begin position="878"/>
        <end position="885"/>
    </location>
    <ligand>
        <name>ATP</name>
        <dbReference type="ChEBI" id="CHEBI:30616"/>
        <label>1</label>
    </ligand>
</feature>
<feature type="binding site" evidence="2">
    <location>
        <begin position="972"/>
        <end position="979"/>
    </location>
    <ligand>
        <name>ATP</name>
        <dbReference type="ChEBI" id="CHEBI:30616"/>
        <label>2</label>
    </ligand>
</feature>
<feature type="modified residue" description="N-acetylserine" evidence="24">
    <location>
        <position position="2"/>
    </location>
</feature>
<feature type="modified residue" description="Phosphoserine" evidence="22">
    <location>
        <position position="32"/>
    </location>
</feature>
<feature type="modified residue" description="Phosphoserine" evidence="20 21 22 23">
    <location>
        <position position="52"/>
    </location>
</feature>
<feature type="modified residue" description="Phosphoserine" evidence="20 21 22 23">
    <location>
        <position position="56"/>
    </location>
</feature>
<feature type="glycosylation site" description="N-linked (GlcNAc...) asparagine" evidence="1">
    <location>
        <position position="1405"/>
    </location>
</feature>
<feature type="cross-link" description="Glycyl lysine isopeptide (Lys-Gly) (interchain with G-Cter in ubiquitin)" evidence="9">
    <location>
        <position position="426"/>
    </location>
</feature>
<reference key="1">
    <citation type="journal article" date="1997" name="Nature">
        <title>The nucleotide sequence of Saccharomyces cerevisiae chromosome XVI.</title>
        <authorList>
            <person name="Bussey H."/>
            <person name="Storms R.K."/>
            <person name="Ahmed A."/>
            <person name="Albermann K."/>
            <person name="Allen E."/>
            <person name="Ansorge W."/>
            <person name="Araujo R."/>
            <person name="Aparicio A."/>
            <person name="Barrell B.G."/>
            <person name="Badcock K."/>
            <person name="Benes V."/>
            <person name="Botstein D."/>
            <person name="Bowman S."/>
            <person name="Brueckner M."/>
            <person name="Carpenter J."/>
            <person name="Cherry J.M."/>
            <person name="Chung E."/>
            <person name="Churcher C.M."/>
            <person name="Coster F."/>
            <person name="Davis K."/>
            <person name="Davis R.W."/>
            <person name="Dietrich F.S."/>
            <person name="Delius H."/>
            <person name="DiPaolo T."/>
            <person name="Dubois E."/>
            <person name="Duesterhoeft A."/>
            <person name="Duncan M."/>
            <person name="Floeth M."/>
            <person name="Fortin N."/>
            <person name="Friesen J.D."/>
            <person name="Fritz C."/>
            <person name="Goffeau A."/>
            <person name="Hall J."/>
            <person name="Hebling U."/>
            <person name="Heumann K."/>
            <person name="Hilbert H."/>
            <person name="Hillier L.W."/>
            <person name="Hunicke-Smith S."/>
            <person name="Hyman R.W."/>
            <person name="Johnston M."/>
            <person name="Kalman S."/>
            <person name="Kleine K."/>
            <person name="Komp C."/>
            <person name="Kurdi O."/>
            <person name="Lashkari D."/>
            <person name="Lew H."/>
            <person name="Lin A."/>
            <person name="Lin D."/>
            <person name="Louis E.J."/>
            <person name="Marathe R."/>
            <person name="Messenguy F."/>
            <person name="Mewes H.-W."/>
            <person name="Mirtipati S."/>
            <person name="Moestl D."/>
            <person name="Mueller-Auer S."/>
            <person name="Namath A."/>
            <person name="Nentwich U."/>
            <person name="Oefner P."/>
            <person name="Pearson D."/>
            <person name="Petel F.X."/>
            <person name="Pohl T.M."/>
            <person name="Purnelle B."/>
            <person name="Rajandream M.A."/>
            <person name="Rechmann S."/>
            <person name="Rieger M."/>
            <person name="Riles L."/>
            <person name="Roberts D."/>
            <person name="Schaefer M."/>
            <person name="Scharfe M."/>
            <person name="Scherens B."/>
            <person name="Schramm S."/>
            <person name="Schroeder M."/>
            <person name="Sdicu A.-M."/>
            <person name="Tettelin H."/>
            <person name="Urrestarazu L.A."/>
            <person name="Ushinsky S."/>
            <person name="Vierendeels F."/>
            <person name="Vissers S."/>
            <person name="Voss H."/>
            <person name="Walsh S.V."/>
            <person name="Wambutt R."/>
            <person name="Wang Y."/>
            <person name="Wedler E."/>
            <person name="Wedler H."/>
            <person name="Winnett E."/>
            <person name="Zhong W.-W."/>
            <person name="Zollner A."/>
            <person name="Vo D.H."/>
            <person name="Hani J."/>
        </authorList>
    </citation>
    <scope>NUCLEOTIDE SEQUENCE [LARGE SCALE GENOMIC DNA]</scope>
    <source>
        <strain>ATCC 204508 / S288c</strain>
    </source>
</reference>
<reference key="2">
    <citation type="journal article" date="2014" name="G3 (Bethesda)">
        <title>The reference genome sequence of Saccharomyces cerevisiae: Then and now.</title>
        <authorList>
            <person name="Engel S.R."/>
            <person name="Dietrich F.S."/>
            <person name="Fisk D.G."/>
            <person name="Binkley G."/>
            <person name="Balakrishnan R."/>
            <person name="Costanzo M.C."/>
            <person name="Dwight S.S."/>
            <person name="Hitz B.C."/>
            <person name="Karra K."/>
            <person name="Nash R.S."/>
            <person name="Weng S."/>
            <person name="Wong E.D."/>
            <person name="Lloyd P."/>
            <person name="Skrzypek M.S."/>
            <person name="Miyasato S.R."/>
            <person name="Simison M."/>
            <person name="Cherry J.M."/>
        </authorList>
    </citation>
    <scope>GENOME REANNOTATION</scope>
    <source>
        <strain>ATCC 204508 / S288c</strain>
    </source>
</reference>
<reference key="3">
    <citation type="journal article" date="1998" name="EMBO J.">
        <title>The pdr12 ABC transporter is required for the development of weak organic acid resistance in yeast.</title>
        <authorList>
            <person name="Piper P.W."/>
            <person name="Mahe Y."/>
            <person name="Thompson S."/>
            <person name="Pandjaitan R."/>
            <person name="Holyoak C.D."/>
            <person name="Egner R."/>
            <person name="Muehlbauer M."/>
            <person name="Coote P.J."/>
            <person name="Kuchler K."/>
        </authorList>
    </citation>
    <scope>FUNCTION</scope>
    <scope>SUBCELLULAR LOCATION</scope>
    <scope>INDUCTION</scope>
</reference>
<reference key="4">
    <citation type="journal article" date="1999" name="J. Bacteriol.">
        <title>The Saccharomyces cerevisiae weak-acid-inducible ABC transporter Pdr12 transports fluorescein and preservative anions from the cytosol by an energy-dependent mechanism.</title>
        <authorList>
            <person name="Holyoak C.D."/>
            <person name="Bracey D."/>
            <person name="Piper P.W."/>
            <person name="Kuchler K."/>
            <person name="Coote P.J."/>
        </authorList>
    </citation>
    <scope>FUNCTION</scope>
</reference>
<reference key="5">
    <citation type="journal article" date="2000" name="Mol. Microbiol.">
        <title>Loss of Cmk1 Ca(2+)-calmodulin-dependent protein kinase in yeast results in constitutive weak organic acid resistance, associated with a post-transcriptional activation of the Pdr12 ATP-binding cassette transporter.</title>
        <authorList>
            <person name="Holyoak C.D."/>
            <person name="Thompson S."/>
            <person name="Ortiz Calderon C."/>
            <person name="Hatzixanthis K."/>
            <person name="Bauer B.E."/>
            <person name="Kuchler K."/>
            <person name="Piper P.W."/>
            <person name="Coote P.J."/>
        </authorList>
    </citation>
    <scope>FUNCTION</scope>
    <scope>PHOSPHORYLATION</scope>
</reference>
<reference key="6">
    <citation type="journal article" date="2003" name="Eur. J. Biochem.">
        <title>Weak organic acid stress inhibits aromatic amino acid uptake by yeast, causing a strong influence of amino acid auxotrophies on the phenotypes of membrane transporter mutants.</title>
        <authorList>
            <person name="Bauer B.E."/>
            <person name="Rossington D."/>
            <person name="Mollapour M."/>
            <person name="Mamnun Y.M."/>
            <person name="Kuchler K."/>
            <person name="Piper P.W."/>
        </authorList>
    </citation>
    <scope>FUNCTION</scope>
</reference>
<reference key="7">
    <citation type="journal article" date="2003" name="Mol. Cell. Biol.">
        <title>War1p, a novel transcription factor controlling weak acid stress response in yeast.</title>
        <authorList>
            <person name="Kren A."/>
            <person name="Mamnun Y.M."/>
            <person name="Bauer B.E."/>
            <person name="Schueller C."/>
            <person name="Wolfger H."/>
            <person name="Hatzixanthis K."/>
            <person name="Mollapour M."/>
            <person name="Gregori C."/>
            <person name="Piper P.W."/>
            <person name="Kuchler K."/>
        </authorList>
    </citation>
    <scope>INDUCTION</scope>
</reference>
<reference key="8">
    <citation type="journal article" date="2003" name="Nature">
        <title>Global analysis of protein localization in budding yeast.</title>
        <authorList>
            <person name="Huh W.-K."/>
            <person name="Falvo J.V."/>
            <person name="Gerke L.C."/>
            <person name="Carroll A.S."/>
            <person name="Howson R.W."/>
            <person name="Weissman J.S."/>
            <person name="O'Shea E.K."/>
        </authorList>
    </citation>
    <scope>SUBCELLULAR LOCATION [LARGE SCALE ANALYSIS]</scope>
</reference>
<reference key="9">
    <citation type="journal article" date="2003" name="Nature">
        <title>Global analysis of protein expression in yeast.</title>
        <authorList>
            <person name="Ghaemmaghami S."/>
            <person name="Huh W.-K."/>
            <person name="Bower K."/>
            <person name="Howson R.W."/>
            <person name="Belle A."/>
            <person name="Dephoure N."/>
            <person name="O'Shea E.K."/>
            <person name="Weissman J.S."/>
        </authorList>
    </citation>
    <scope>LEVEL OF PROTEIN EXPRESSION [LARGE SCALE ANALYSIS]</scope>
</reference>
<reference key="10">
    <citation type="journal article" date="2004" name="Mol. Biol. Cell">
        <title>Global phenotypic analysis and transcriptional profiling defines the weak acid stress response regulon in Saccharomyces cerevisiae.</title>
        <authorList>
            <person name="Schueller C."/>
            <person name="Mamnun Y.M."/>
            <person name="Mollapour M."/>
            <person name="Krapf G."/>
            <person name="Schuster M."/>
            <person name="Bauer B.E."/>
            <person name="Piper P.W."/>
            <person name="Kuchler K."/>
        </authorList>
    </citation>
    <scope>INDUCTION</scope>
</reference>
<reference key="11">
    <citation type="journal article" date="2003" name="Nat. Biotechnol.">
        <title>A proteomics approach to understanding protein ubiquitination.</title>
        <authorList>
            <person name="Peng J."/>
            <person name="Schwartz D."/>
            <person name="Elias J.E."/>
            <person name="Thoreen C.C."/>
            <person name="Cheng D."/>
            <person name="Marsischky G."/>
            <person name="Roelofs J."/>
            <person name="Finley D."/>
            <person name="Gygi S.P."/>
        </authorList>
    </citation>
    <scope>UBIQUITINATION [LARGE SCALE ANALYSIS] AT LYS-426</scope>
    <scope>IDENTIFICATION BY MASS SPECTROMETRY</scope>
    <source>
        <strain>SUB592</strain>
    </source>
</reference>
<reference key="12">
    <citation type="journal article" date="2003" name="Yeast">
        <title>Moderately lipophilic carboxylate compounds are the selective inducers of the Saccharomyces cerevisiae Pdr12p ATP-binding cassette transporter.</title>
        <authorList>
            <person name="Hatzixanthis K."/>
            <person name="Mollapour M."/>
            <person name="Seymour I."/>
            <person name="Bauer B.E."/>
            <person name="Krapf G."/>
            <person name="Schueller C."/>
            <person name="Kuchler K."/>
            <person name="Piper P.W."/>
        </authorList>
    </citation>
    <scope>INDUCTION</scope>
</reference>
<reference key="13">
    <citation type="journal article" date="2005" name="Mol. Cell. Proteomics">
        <title>Quantitative phosphoproteomics applied to the yeast pheromone signaling pathway.</title>
        <authorList>
            <person name="Gruhler A."/>
            <person name="Olsen J.V."/>
            <person name="Mohammed S."/>
            <person name="Mortensen P."/>
            <person name="Faergeman N.J."/>
            <person name="Mann M."/>
            <person name="Jensen O.N."/>
        </authorList>
    </citation>
    <scope>PHOSPHORYLATION [LARGE SCALE ANALYSIS] AT SER-52 AND SER-56</scope>
    <scope>IDENTIFICATION BY MASS SPECTROMETRY [LARGE SCALE ANALYSIS]</scope>
    <source>
        <strain>YAL6B</strain>
    </source>
</reference>
<reference key="14">
    <citation type="journal article" date="2006" name="FEMS Yeast Res.">
        <title>A new physiological role for Pdr12p in Saccharomyces cerevisiae: export of aromatic and branched-chain organic acids produced in amino acid catabolism.</title>
        <authorList>
            <person name="Hazelwood L.A."/>
            <person name="Tai S.L."/>
            <person name="Boer V.M."/>
            <person name="de Winde J.H."/>
            <person name="Pronk J.T."/>
            <person name="Daran J.-M."/>
        </authorList>
    </citation>
    <scope>FUNCTION</scope>
</reference>
<reference key="15">
    <citation type="journal article" date="2006" name="Proc. Natl. Acad. Sci. U.S.A.">
        <title>A global topology map of the Saccharomyces cerevisiae membrane proteome.</title>
        <authorList>
            <person name="Kim H."/>
            <person name="Melen K."/>
            <person name="Oesterberg M."/>
            <person name="von Heijne G."/>
        </authorList>
    </citation>
    <scope>TOPOLOGY [LARGE SCALE ANALYSIS]</scope>
    <source>
        <strain>ATCC 208353 / W303-1A</strain>
    </source>
</reference>
<reference key="16">
    <citation type="journal article" date="2007" name="FEBS J.">
        <title>A genetic screen identifies mutations in the yeast WAR1 gene, linking transcription factor phosphorylation to weak-acid stress adaptation.</title>
        <authorList>
            <person name="Gregori C."/>
            <person name="Bauer B.E."/>
            <person name="Schwartz C."/>
            <person name="Kren A."/>
            <person name="Schueller C."/>
            <person name="Kuchler K."/>
        </authorList>
    </citation>
    <scope>INDUCTION</scope>
</reference>
<reference key="17">
    <citation type="journal article" date="2007" name="Int. J. Food Microbiol.">
        <title>High Pdr12 levels in spoilage yeast (Saccharomyces cerevisiae) correlate directly with sorbic acid levels in the culture medium but are not sufficient to provide cells with acquired resistance to the food preservative.</title>
        <authorList>
            <person name="Papadimitriou M.N.B."/>
            <person name="Resende C."/>
            <person name="Kuchler K."/>
            <person name="Brul S."/>
        </authorList>
    </citation>
    <scope>FUNCTION</scope>
    <scope>INDUCTION</scope>
</reference>
<reference key="18">
    <citation type="journal article" date="2007" name="J. Proteome Res.">
        <title>Large-scale phosphorylation analysis of alpha-factor-arrested Saccharomyces cerevisiae.</title>
        <authorList>
            <person name="Li X."/>
            <person name="Gerber S.A."/>
            <person name="Rudner A.D."/>
            <person name="Beausoleil S.A."/>
            <person name="Haas W."/>
            <person name="Villen J."/>
            <person name="Elias J.E."/>
            <person name="Gygi S.P."/>
        </authorList>
    </citation>
    <scope>PHOSPHORYLATION [LARGE SCALE ANALYSIS] AT SER-52 AND SER-56</scope>
    <scope>IDENTIFICATION BY MASS SPECTROMETRY [LARGE SCALE ANALYSIS]</scope>
    <source>
        <strain>ADR376</strain>
    </source>
</reference>
<reference key="19">
    <citation type="journal article" date="2008" name="Acta Biochim. Pol.">
        <title>Pdr12p-dependent and -independent fluorescein extrusion from baker's yeast cells.</title>
        <authorList>
            <person name="Lushchak V."/>
            <person name="Abrat O."/>
            <person name="Miedzobrodzki J."/>
            <person name="Semchyshyn H."/>
        </authorList>
    </citation>
    <scope>FUNCTION</scope>
</reference>
<reference key="20">
    <citation type="journal article" date="2008" name="J. Biol. Chem.">
        <title>Weak organic acids trigger conformational changes of the yeast transcription factor War1 in vivo to elicit stress adaptation.</title>
        <authorList>
            <person name="Gregori C."/>
            <person name="Schueller C."/>
            <person name="Frohner I.E."/>
            <person name="Ammerer G."/>
            <person name="Kuchler K."/>
        </authorList>
    </citation>
    <scope>INDUCTION</scope>
</reference>
<reference key="21">
    <citation type="journal article" date="2008" name="Mol. Cell. Proteomics">
        <title>A multidimensional chromatography technology for in-depth phosphoproteome analysis.</title>
        <authorList>
            <person name="Albuquerque C.P."/>
            <person name="Smolka M.B."/>
            <person name="Payne S.H."/>
            <person name="Bafna V."/>
            <person name="Eng J."/>
            <person name="Zhou H."/>
        </authorList>
    </citation>
    <scope>PHOSPHORYLATION [LARGE SCALE ANALYSIS] AT SER-32; SER-52 AND SER-56</scope>
    <scope>IDENTIFICATION BY MASS SPECTROMETRY [LARGE SCALE ANALYSIS]</scope>
</reference>
<reference key="22">
    <citation type="journal article" date="2009" name="Science">
        <title>Global analysis of Cdk1 substrate phosphorylation sites provides insights into evolution.</title>
        <authorList>
            <person name="Holt L.J."/>
            <person name="Tuch B.B."/>
            <person name="Villen J."/>
            <person name="Johnson A.D."/>
            <person name="Gygi S.P."/>
            <person name="Morgan D.O."/>
        </authorList>
    </citation>
    <scope>PHOSPHORYLATION [LARGE SCALE ANALYSIS] AT SER-52 AND SER-56</scope>
    <scope>IDENTIFICATION BY MASS SPECTROMETRY [LARGE SCALE ANALYSIS]</scope>
</reference>
<reference key="23">
    <citation type="journal article" date="2012" name="Proc. Natl. Acad. Sci. U.S.A.">
        <title>N-terminal acetylome analyses and functional insights of the N-terminal acetyltransferase NatB.</title>
        <authorList>
            <person name="Van Damme P."/>
            <person name="Lasa M."/>
            <person name="Polevoda B."/>
            <person name="Gazquez C."/>
            <person name="Elosegui-Artola A."/>
            <person name="Kim D.S."/>
            <person name="De Juan-Pardo E."/>
            <person name="Demeyer K."/>
            <person name="Hole K."/>
            <person name="Larrea E."/>
            <person name="Timmerman E."/>
            <person name="Prieto J."/>
            <person name="Arnesen T."/>
            <person name="Sherman F."/>
            <person name="Gevaert K."/>
            <person name="Aldabe R."/>
        </authorList>
    </citation>
    <scope>ACETYLATION [LARGE SCALE ANALYSIS] AT SER-2</scope>
    <scope>CLEAVAGE OF INITIATOR METHIONINE [LARGE SCALE ANALYSIS]</scope>
    <scope>IDENTIFICATION BY MASS SPECTROMETRY [LARGE SCALE ANALYSIS]</scope>
</reference>
<accession>Q02785</accession>
<accession>D6W3V6</accession>
<organism>
    <name type="scientific">Saccharomyces cerevisiae (strain ATCC 204508 / S288c)</name>
    <name type="common">Baker's yeast</name>
    <dbReference type="NCBI Taxonomy" id="559292"/>
    <lineage>
        <taxon>Eukaryota</taxon>
        <taxon>Fungi</taxon>
        <taxon>Dikarya</taxon>
        <taxon>Ascomycota</taxon>
        <taxon>Saccharomycotina</taxon>
        <taxon>Saccharomycetes</taxon>
        <taxon>Saccharomycetales</taxon>
        <taxon>Saccharomycetaceae</taxon>
        <taxon>Saccharomyces</taxon>
    </lineage>
</organism>
<proteinExistence type="evidence at protein level"/>
<evidence type="ECO:0000255" key="1"/>
<evidence type="ECO:0000255" key="2">
    <source>
        <dbReference type="PROSITE-ProRule" id="PRU00434"/>
    </source>
</evidence>
<evidence type="ECO:0000256" key="3">
    <source>
        <dbReference type="SAM" id="MobiDB-lite"/>
    </source>
</evidence>
<evidence type="ECO:0000269" key="4">
    <source>
    </source>
</evidence>
<evidence type="ECO:0000269" key="5">
    <source>
    </source>
</evidence>
<evidence type="ECO:0000269" key="6">
    <source>
    </source>
</evidence>
<evidence type="ECO:0000269" key="7">
    <source>
    </source>
</evidence>
<evidence type="ECO:0000269" key="8">
    <source>
    </source>
</evidence>
<evidence type="ECO:0000269" key="9">
    <source>
    </source>
</evidence>
<evidence type="ECO:0000269" key="10">
    <source>
    </source>
</evidence>
<evidence type="ECO:0000269" key="11">
    <source>
    </source>
</evidence>
<evidence type="ECO:0000269" key="12">
    <source>
    </source>
</evidence>
<evidence type="ECO:0000269" key="13">
    <source>
    </source>
</evidence>
<evidence type="ECO:0000269" key="14">
    <source>
    </source>
</evidence>
<evidence type="ECO:0000269" key="15">
    <source>
    </source>
</evidence>
<evidence type="ECO:0000269" key="16">
    <source>
    </source>
</evidence>
<evidence type="ECO:0000269" key="17">
    <source>
    </source>
</evidence>
<evidence type="ECO:0000269" key="18">
    <source>
    </source>
</evidence>
<evidence type="ECO:0000305" key="19"/>
<evidence type="ECO:0007744" key="20">
    <source>
    </source>
</evidence>
<evidence type="ECO:0007744" key="21">
    <source>
    </source>
</evidence>
<evidence type="ECO:0007744" key="22">
    <source>
    </source>
</evidence>
<evidence type="ECO:0007744" key="23">
    <source>
    </source>
</evidence>
<evidence type="ECO:0007744" key="24">
    <source>
    </source>
</evidence>
<protein>
    <recommendedName>
        <fullName>ATP-dependent permease PDR12</fullName>
    </recommendedName>
</protein>
<comment type="function">
    <text evidence="4 5 8 13 14 17 18">Plasma membrane transporter which mediates resistance to water-soluble, monocarboxylic acids with chain lengths of from C1 to C7 by active extrusion of the preservative anions from the cytosol. Also involved in the export of aromatic and branched-chain organic acids produced in amino acid catabolism.</text>
</comment>
<comment type="interaction">
    <interactant intactId="EBI-13065">
        <id>Q02785</id>
    </interactant>
    <interactant intactId="EBI-13038">
        <id>P33302</id>
        <label>PDR5</label>
    </interactant>
    <organismsDiffer>false</organismsDiffer>
    <experiments>3</experiments>
</comment>
<comment type="subcellular location">
    <subcellularLocation>
        <location evidence="10 18">Cell membrane</location>
        <topology evidence="10 18">Multi-pass membrane protein</topology>
    </subcellularLocation>
</comment>
<comment type="induction">
    <text evidence="6 7 12 14 15 16 18">By weak acids like sorbate through the WAR1 transcription activator.</text>
</comment>
<comment type="miscellaneous">
    <text evidence="11">Present with 752 molecules/cell in log phase SD medium.</text>
</comment>
<comment type="similarity">
    <text evidence="19">Belongs to the ABC transporter superfamily. ABCG family. PDR (TC 3.A.1.205) subfamily.</text>
</comment>
<keyword id="KW-0007">Acetylation</keyword>
<keyword id="KW-0067">ATP-binding</keyword>
<keyword id="KW-1003">Cell membrane</keyword>
<keyword id="KW-0325">Glycoprotein</keyword>
<keyword id="KW-1017">Isopeptide bond</keyword>
<keyword id="KW-0472">Membrane</keyword>
<keyword id="KW-0547">Nucleotide-binding</keyword>
<keyword id="KW-0597">Phosphoprotein</keyword>
<keyword id="KW-1185">Reference proteome</keyword>
<keyword id="KW-0677">Repeat</keyword>
<keyword id="KW-0812">Transmembrane</keyword>
<keyword id="KW-1133">Transmembrane helix</keyword>
<keyword id="KW-0813">Transport</keyword>
<keyword id="KW-0832">Ubl conjugation</keyword>
<sequence>MSSTDEHIEKDISSRSNHDDDYANSVQSYAASEGQVDNEDLAATSQLSRHLSNILSNEEGIERLESMARVISHKTKKEMDSFEINDLDFDLRSLLHYLRSRQLEQGIEPGDSGIAFKNLTAVGVDASAAYGPSVEEMFRNIASIPAHLISKFTKKSDVPLRNIIQNCTGVVESGEMLFVVGRPGAGCSTFLKCLSGETSELVDVQGEFSYDGLDQSEMMSKYKGYVIYCPELDFHFPKITVKETIDFALKCKTPRVRIDKMTRKQYVDNIRDMWCTVFGLRHTYATKVGNDFVRGVSGGERKRVSLVEAQAMNASIYSWDNATRGLDASTALEFAQAIRTATNMVNNSAIVAIYQAGENIYELFDKTTVLYNGRQIYFGPADKAVGYFQRMGWVKPNRMTSAEFLTSVTVDFENRTLDIKPGYEDKVPKSSSEFEEYWLNSEDYQELLRTYDDYQSRHPVNETRDRLDVAKKQRLQQGQRENSQYVVNYWTQVYYCMIRGFQRVKGDSTYTKVYLSSFLIKALIIGSMFHKIDDKSQSTTAGAYSRGGMLFYVLLFASVTSLAEIGNSFSSRPVIVKHKSYSMYHLSAESLQEIITEFPTKFVAIVILCLITYWIPFMKYEAGAFFQYILYLLTVQQCTSFIFKFVATMSKSGVDAHAVGGLWVLMLCVYAGFVLPIGEMHHWIRWLHFINPLTYAFESLVSTEFHHREMLCSALVPSGPGYEGISIANQVCDAAGAVKGNLYVSGDSYILHQYHFAYKHAWRNWGVNIVWTFGYIVFNVILSEYLKPVEGGGDLLLYKRGHMPELGTENADARTASREEMMEALNGPNVDLEKVIAEKDVFTWNHLDYTIPYDGATRKLLSDVFGYVKPGKMTALMGESGAGKTTLLNVLAQRINMGVITGDMLVNAKPLPASFNRSCGYVAQADNHMAELSVRESLRFAAELRQQSSVPLEEKYEYVEKIITLLGMQNYAEALVGKTGRGLNVEQRKKLSIGVELVAKPSLLLFLDEPTSGLDSQSAWSIVQFMRALADSGQSILCTIHQPSATLFEQFDRLLLLKKGGKMVYFGDIGPNSETLLKYFERQSGMKCGVSENPAEYILNCIGAGATASVNSDWHDLWLASPECAAARAEVEELHRTLPGRAVNDDPELATRFAASYMTQIKCVLRRTALQFWRSPVYIRAKFFECVACALFVGLSYVGVNHSVGGAIEAFSSIFMLLLIALAMINQLHVFAYDSRELYEVREAASNTFHWSVLLLCHAAVENFWSTLCQFMCFICYYWPAQFSGRASHAGFFFFFYVLIFPLYFVTYGLWILYMSPDVPSASMINSNLFAAMLLFCGILQPREKMPAFWRRLMYNVSPFTYVVQALVTPLVHNKKVVCNPHEYNIMDPPSGKTCGEFLSTYMDNNTGYLVNPTATENCQYCPYTVQDQVVAKYNVKWDHRWRNFGFMWAYICFNIAAMLICYYVVRVKVWSLKSVLNFKKWFNGPRKERHEKDTNIFQTVPGDENKITKK</sequence>
<gene>
    <name type="primary">PDR12</name>
    <name type="ordered locus">YPL058C</name>
    <name type="ORF">LPE14C</name>
</gene>